<name>RL4_GEOSM</name>
<accession>C6E4Q6</accession>
<feature type="chain" id="PRO_1000214574" description="Large ribosomal subunit protein uL4">
    <location>
        <begin position="1"/>
        <end position="207"/>
    </location>
</feature>
<feature type="region of interest" description="Disordered" evidence="2">
    <location>
        <begin position="62"/>
        <end position="85"/>
    </location>
</feature>
<reference key="1">
    <citation type="submission" date="2009-07" db="EMBL/GenBank/DDBJ databases">
        <title>Complete sequence of Geobacter sp. M21.</title>
        <authorList>
            <consortium name="US DOE Joint Genome Institute"/>
            <person name="Lucas S."/>
            <person name="Copeland A."/>
            <person name="Lapidus A."/>
            <person name="Glavina del Rio T."/>
            <person name="Dalin E."/>
            <person name="Tice H."/>
            <person name="Bruce D."/>
            <person name="Goodwin L."/>
            <person name="Pitluck S."/>
            <person name="Saunders E."/>
            <person name="Brettin T."/>
            <person name="Detter J.C."/>
            <person name="Han C."/>
            <person name="Larimer F."/>
            <person name="Land M."/>
            <person name="Hauser L."/>
            <person name="Kyrpides N."/>
            <person name="Ovchinnikova G."/>
            <person name="Lovley D."/>
        </authorList>
    </citation>
    <scope>NUCLEOTIDE SEQUENCE [LARGE SCALE GENOMIC DNA]</scope>
    <source>
        <strain>M21</strain>
    </source>
</reference>
<proteinExistence type="inferred from homology"/>
<keyword id="KW-0687">Ribonucleoprotein</keyword>
<keyword id="KW-0689">Ribosomal protein</keyword>
<keyword id="KW-0694">RNA-binding</keyword>
<keyword id="KW-0699">rRNA-binding</keyword>
<evidence type="ECO:0000255" key="1">
    <source>
        <dbReference type="HAMAP-Rule" id="MF_01328"/>
    </source>
</evidence>
<evidence type="ECO:0000256" key="2">
    <source>
        <dbReference type="SAM" id="MobiDB-lite"/>
    </source>
</evidence>
<evidence type="ECO:0000305" key="3"/>
<sequence>MAKLDVFDIKKAKVGEIELDDAVFNDDVREYLIHEAVKIQLANRRQGTVAVKNRALVAGSGKKPFKQKGTGQARQGCRRAPQYPGGGVAFGPQPKDYNLSMNKKARKAALRSALSMLYKKDAITVVNSLELPSIKTKAFVEVLTAFNLDKTLVITDTATPTLELSARNVKHVKVLGPEGLNIFDIMKYQSVVFTEAAVRRVEGALQS</sequence>
<protein>
    <recommendedName>
        <fullName evidence="1">Large ribosomal subunit protein uL4</fullName>
    </recommendedName>
    <alternativeName>
        <fullName evidence="3">50S ribosomal protein L4</fullName>
    </alternativeName>
</protein>
<organism>
    <name type="scientific">Geobacter sp. (strain M21)</name>
    <dbReference type="NCBI Taxonomy" id="443144"/>
    <lineage>
        <taxon>Bacteria</taxon>
        <taxon>Pseudomonadati</taxon>
        <taxon>Thermodesulfobacteriota</taxon>
        <taxon>Desulfuromonadia</taxon>
        <taxon>Geobacterales</taxon>
        <taxon>Geobacteraceae</taxon>
        <taxon>Geobacter</taxon>
    </lineage>
</organism>
<gene>
    <name evidence="1" type="primary">rplD</name>
    <name type="ordered locus">GM21_3327</name>
</gene>
<comment type="function">
    <text evidence="1">One of the primary rRNA binding proteins, this protein initially binds near the 5'-end of the 23S rRNA. It is important during the early stages of 50S assembly. It makes multiple contacts with different domains of the 23S rRNA in the assembled 50S subunit and ribosome.</text>
</comment>
<comment type="function">
    <text evidence="1">Forms part of the polypeptide exit tunnel.</text>
</comment>
<comment type="subunit">
    <text evidence="1">Part of the 50S ribosomal subunit.</text>
</comment>
<comment type="similarity">
    <text evidence="1">Belongs to the universal ribosomal protein uL4 family.</text>
</comment>
<dbReference type="EMBL" id="CP001661">
    <property type="protein sequence ID" value="ACT19352.1"/>
    <property type="molecule type" value="Genomic_DNA"/>
</dbReference>
<dbReference type="SMR" id="C6E4Q6"/>
<dbReference type="STRING" id="443144.GM21_3327"/>
<dbReference type="KEGG" id="gem:GM21_3327"/>
<dbReference type="eggNOG" id="COG0088">
    <property type="taxonomic scope" value="Bacteria"/>
</dbReference>
<dbReference type="HOGENOM" id="CLU_041575_5_2_7"/>
<dbReference type="OrthoDB" id="9803201at2"/>
<dbReference type="GO" id="GO:1990904">
    <property type="term" value="C:ribonucleoprotein complex"/>
    <property type="evidence" value="ECO:0007669"/>
    <property type="project" value="UniProtKB-KW"/>
</dbReference>
<dbReference type="GO" id="GO:0005840">
    <property type="term" value="C:ribosome"/>
    <property type="evidence" value="ECO:0007669"/>
    <property type="project" value="UniProtKB-KW"/>
</dbReference>
<dbReference type="GO" id="GO:0019843">
    <property type="term" value="F:rRNA binding"/>
    <property type="evidence" value="ECO:0007669"/>
    <property type="project" value="UniProtKB-UniRule"/>
</dbReference>
<dbReference type="GO" id="GO:0003735">
    <property type="term" value="F:structural constituent of ribosome"/>
    <property type="evidence" value="ECO:0007669"/>
    <property type="project" value="InterPro"/>
</dbReference>
<dbReference type="GO" id="GO:0006412">
    <property type="term" value="P:translation"/>
    <property type="evidence" value="ECO:0007669"/>
    <property type="project" value="UniProtKB-UniRule"/>
</dbReference>
<dbReference type="Gene3D" id="3.40.1370.10">
    <property type="match status" value="1"/>
</dbReference>
<dbReference type="HAMAP" id="MF_01328_B">
    <property type="entry name" value="Ribosomal_uL4_B"/>
    <property type="match status" value="1"/>
</dbReference>
<dbReference type="InterPro" id="IPR002136">
    <property type="entry name" value="Ribosomal_uL4"/>
</dbReference>
<dbReference type="InterPro" id="IPR013005">
    <property type="entry name" value="Ribosomal_uL4-like"/>
</dbReference>
<dbReference type="InterPro" id="IPR023574">
    <property type="entry name" value="Ribosomal_uL4_dom_sf"/>
</dbReference>
<dbReference type="NCBIfam" id="TIGR03953">
    <property type="entry name" value="rplD_bact"/>
    <property type="match status" value="1"/>
</dbReference>
<dbReference type="PANTHER" id="PTHR10746">
    <property type="entry name" value="50S RIBOSOMAL PROTEIN L4"/>
    <property type="match status" value="1"/>
</dbReference>
<dbReference type="PANTHER" id="PTHR10746:SF6">
    <property type="entry name" value="LARGE RIBOSOMAL SUBUNIT PROTEIN UL4M"/>
    <property type="match status" value="1"/>
</dbReference>
<dbReference type="Pfam" id="PF00573">
    <property type="entry name" value="Ribosomal_L4"/>
    <property type="match status" value="1"/>
</dbReference>
<dbReference type="SUPFAM" id="SSF52166">
    <property type="entry name" value="Ribosomal protein L4"/>
    <property type="match status" value="1"/>
</dbReference>